<name>PR1C_HORVU</name>
<evidence type="ECO:0000255" key="1"/>
<evidence type="ECO:0000255" key="2">
    <source>
        <dbReference type="PROSITE-ProRule" id="PRU00699"/>
    </source>
</evidence>
<reference key="1">
    <citation type="journal article" date="1993" name="Mol. Plant Microbe Interact.">
        <title>Cultivar-specific elicitation of barley defense reactions by the phytotoxic peptide NIP1 from Rhynchosporium secalis.</title>
        <authorList>
            <person name="Hahn M."/>
            <person name="Lehnackers H."/>
            <person name="Knogge W."/>
        </authorList>
    </citation>
    <scope>NUCLEOTIDE SEQUENCE [MRNA]</scope>
    <source>
        <tissue>Leaf</tissue>
    </source>
</reference>
<feature type="signal peptide" evidence="1">
    <location>
        <begin position="1"/>
        <end position="20"/>
    </location>
</feature>
<feature type="chain" id="PRO_0000034027" description="Pathogenesis-related protein 1C">
    <location>
        <begin position="21"/>
        <end position="173"/>
    </location>
</feature>
<dbReference type="EMBL" id="X58565">
    <property type="protein sequence ID" value="CAA41445.1"/>
    <property type="molecule type" value="mRNA"/>
</dbReference>
<dbReference type="PIR" id="S18035">
    <property type="entry name" value="S18035"/>
</dbReference>
<dbReference type="SMR" id="P32938"/>
<dbReference type="GO" id="GO:0006952">
    <property type="term" value="P:defense response"/>
    <property type="evidence" value="ECO:0007669"/>
    <property type="project" value="UniProtKB-KW"/>
</dbReference>
<dbReference type="CDD" id="cd09217">
    <property type="entry name" value="TLP-P"/>
    <property type="match status" value="1"/>
</dbReference>
<dbReference type="Gene3D" id="2.60.110.10">
    <property type="entry name" value="Thaumatin"/>
    <property type="match status" value="1"/>
</dbReference>
<dbReference type="InterPro" id="IPR037176">
    <property type="entry name" value="Osmotin/thaumatin-like_sf"/>
</dbReference>
<dbReference type="InterPro" id="IPR001938">
    <property type="entry name" value="Thaumatin"/>
</dbReference>
<dbReference type="InterPro" id="IPR017949">
    <property type="entry name" value="Thaumatin_CS"/>
</dbReference>
<dbReference type="PANTHER" id="PTHR31048">
    <property type="entry name" value="OS03G0233200 PROTEIN"/>
    <property type="match status" value="1"/>
</dbReference>
<dbReference type="Pfam" id="PF00314">
    <property type="entry name" value="Thaumatin"/>
    <property type="match status" value="1"/>
</dbReference>
<dbReference type="PIRSF" id="PIRSF002703">
    <property type="entry name" value="Thaumatin"/>
    <property type="match status" value="1"/>
</dbReference>
<dbReference type="PRINTS" id="PR00347">
    <property type="entry name" value="THAUMATIN"/>
</dbReference>
<dbReference type="SMART" id="SM00205">
    <property type="entry name" value="THN"/>
    <property type="match status" value="1"/>
</dbReference>
<dbReference type="SUPFAM" id="SSF49870">
    <property type="entry name" value="Osmotin, thaumatin-like protein"/>
    <property type="match status" value="1"/>
</dbReference>
<dbReference type="PROSITE" id="PS00316">
    <property type="entry name" value="THAUMATIN_1"/>
    <property type="match status" value="1"/>
</dbReference>
<dbReference type="PROSITE" id="PS51367">
    <property type="entry name" value="THAUMATIN_2"/>
    <property type="match status" value="1"/>
</dbReference>
<accession>P32938</accession>
<organism>
    <name type="scientific">Hordeum vulgare</name>
    <name type="common">Barley</name>
    <dbReference type="NCBI Taxonomy" id="4513"/>
    <lineage>
        <taxon>Eukaryota</taxon>
        <taxon>Viridiplantae</taxon>
        <taxon>Streptophyta</taxon>
        <taxon>Embryophyta</taxon>
        <taxon>Tracheophyta</taxon>
        <taxon>Spermatophyta</taxon>
        <taxon>Magnoliopsida</taxon>
        <taxon>Liliopsida</taxon>
        <taxon>Poales</taxon>
        <taxon>Poaceae</taxon>
        <taxon>BOP clade</taxon>
        <taxon>Pooideae</taxon>
        <taxon>Triticodae</taxon>
        <taxon>Triticeae</taxon>
        <taxon>Hordeinae</taxon>
        <taxon>Hordeum</taxon>
    </lineage>
</organism>
<sequence length="173" mass="17576">MSTSAVLFLLLAVFAAGASAATFNIKNNCGSTIWPAGIPVGGGFELGSGQTSSINVPAGTQAGRIWARTGCSFNGGSGSCQTGDCGGQLSCSLSGRPPATLAEFTIGGGSTQDFYDISVIDGFNLAMDFSCSTGDALQCRDPSCPPPQAYQHPNDVATHACSGNNNYQITFCP</sequence>
<keyword id="KW-0568">Pathogenesis-related protein</keyword>
<keyword id="KW-0611">Plant defense</keyword>
<keyword id="KW-0732">Signal</keyword>
<proteinExistence type="evidence at transcript level"/>
<comment type="similarity">
    <text evidence="2">Belongs to the thaumatin family.</text>
</comment>
<protein>
    <recommendedName>
        <fullName>Pathogenesis-related protein 1C</fullName>
    </recommendedName>
</protein>